<name>XGPT_SALEP</name>
<dbReference type="EC" id="2.4.2.-" evidence="1"/>
<dbReference type="EC" id="2.4.2.22" evidence="1"/>
<dbReference type="EMBL" id="AM933172">
    <property type="protein sequence ID" value="CAR31887.1"/>
    <property type="molecule type" value="Genomic_DNA"/>
</dbReference>
<dbReference type="RefSeq" id="WP_001292018.1">
    <property type="nucleotide sequence ID" value="NC_011294.1"/>
</dbReference>
<dbReference type="SMR" id="B5R4S1"/>
<dbReference type="GeneID" id="66754798"/>
<dbReference type="KEGG" id="set:SEN0300"/>
<dbReference type="HOGENOM" id="CLU_080904_3_0_6"/>
<dbReference type="UniPathway" id="UPA00602">
    <property type="reaction ID" value="UER00658"/>
</dbReference>
<dbReference type="UniPathway" id="UPA00909">
    <property type="reaction ID" value="UER00887"/>
</dbReference>
<dbReference type="Proteomes" id="UP000000613">
    <property type="component" value="Chromosome"/>
</dbReference>
<dbReference type="GO" id="GO:0005829">
    <property type="term" value="C:cytosol"/>
    <property type="evidence" value="ECO:0007669"/>
    <property type="project" value="TreeGrafter"/>
</dbReference>
<dbReference type="GO" id="GO:0005886">
    <property type="term" value="C:plasma membrane"/>
    <property type="evidence" value="ECO:0007669"/>
    <property type="project" value="UniProtKB-SubCell"/>
</dbReference>
<dbReference type="GO" id="GO:0052657">
    <property type="term" value="F:guanine phosphoribosyltransferase activity"/>
    <property type="evidence" value="ECO:0007669"/>
    <property type="project" value="RHEA"/>
</dbReference>
<dbReference type="GO" id="GO:0004422">
    <property type="term" value="F:hypoxanthine phosphoribosyltransferase activity"/>
    <property type="evidence" value="ECO:0007669"/>
    <property type="project" value="TreeGrafter"/>
</dbReference>
<dbReference type="GO" id="GO:0000287">
    <property type="term" value="F:magnesium ion binding"/>
    <property type="evidence" value="ECO:0007669"/>
    <property type="project" value="UniProtKB-UniRule"/>
</dbReference>
<dbReference type="GO" id="GO:0000310">
    <property type="term" value="F:xanthine phosphoribosyltransferase activity"/>
    <property type="evidence" value="ECO:0007669"/>
    <property type="project" value="UniProtKB-UniRule"/>
</dbReference>
<dbReference type="GO" id="GO:0032263">
    <property type="term" value="P:GMP salvage"/>
    <property type="evidence" value="ECO:0007669"/>
    <property type="project" value="UniProtKB-UniRule"/>
</dbReference>
<dbReference type="GO" id="GO:0032264">
    <property type="term" value="P:IMP salvage"/>
    <property type="evidence" value="ECO:0007669"/>
    <property type="project" value="TreeGrafter"/>
</dbReference>
<dbReference type="GO" id="GO:0006166">
    <property type="term" value="P:purine ribonucleoside salvage"/>
    <property type="evidence" value="ECO:0007669"/>
    <property type="project" value="UniProtKB-KW"/>
</dbReference>
<dbReference type="GO" id="GO:0032265">
    <property type="term" value="P:XMP salvage"/>
    <property type="evidence" value="ECO:0007669"/>
    <property type="project" value="UniProtKB-UniRule"/>
</dbReference>
<dbReference type="CDD" id="cd06223">
    <property type="entry name" value="PRTases_typeI"/>
    <property type="match status" value="1"/>
</dbReference>
<dbReference type="FunFam" id="3.40.50.2020:FF:000009">
    <property type="entry name" value="Xanthine phosphoribosyltransferase"/>
    <property type="match status" value="1"/>
</dbReference>
<dbReference type="Gene3D" id="3.40.50.2020">
    <property type="match status" value="1"/>
</dbReference>
<dbReference type="HAMAP" id="MF_01903">
    <property type="entry name" value="XGPRT"/>
    <property type="match status" value="1"/>
</dbReference>
<dbReference type="InterPro" id="IPR000836">
    <property type="entry name" value="PRibTrfase_dom"/>
</dbReference>
<dbReference type="InterPro" id="IPR029057">
    <property type="entry name" value="PRTase-like"/>
</dbReference>
<dbReference type="InterPro" id="IPR023747">
    <property type="entry name" value="Xanthine_Guanine_PRibTrfase"/>
</dbReference>
<dbReference type="NCBIfam" id="NF006613">
    <property type="entry name" value="PRK09177.1"/>
    <property type="match status" value="1"/>
</dbReference>
<dbReference type="PANTHER" id="PTHR39563">
    <property type="entry name" value="XANTHINE PHOSPHORIBOSYLTRANSFERASE"/>
    <property type="match status" value="1"/>
</dbReference>
<dbReference type="PANTHER" id="PTHR39563:SF1">
    <property type="entry name" value="XANTHINE-GUANINE PHOSPHORIBOSYLTRANSFERASE"/>
    <property type="match status" value="1"/>
</dbReference>
<dbReference type="Pfam" id="PF00156">
    <property type="entry name" value="Pribosyltran"/>
    <property type="match status" value="1"/>
</dbReference>
<dbReference type="SUPFAM" id="SSF53271">
    <property type="entry name" value="PRTase-like"/>
    <property type="match status" value="1"/>
</dbReference>
<dbReference type="PROSITE" id="PS00103">
    <property type="entry name" value="PUR_PYR_PR_TRANSFER"/>
    <property type="match status" value="1"/>
</dbReference>
<reference key="1">
    <citation type="journal article" date="2008" name="Genome Res.">
        <title>Comparative genome analysis of Salmonella enteritidis PT4 and Salmonella gallinarum 287/91 provides insights into evolutionary and host adaptation pathways.</title>
        <authorList>
            <person name="Thomson N.R."/>
            <person name="Clayton D.J."/>
            <person name="Windhorst D."/>
            <person name="Vernikos G."/>
            <person name="Davidson S."/>
            <person name="Churcher C."/>
            <person name="Quail M.A."/>
            <person name="Stevens M."/>
            <person name="Jones M.A."/>
            <person name="Watson M."/>
            <person name="Barron A."/>
            <person name="Layton A."/>
            <person name="Pickard D."/>
            <person name="Kingsley R.A."/>
            <person name="Bignell A."/>
            <person name="Clark L."/>
            <person name="Harris B."/>
            <person name="Ormond D."/>
            <person name="Abdellah Z."/>
            <person name="Brooks K."/>
            <person name="Cherevach I."/>
            <person name="Chillingworth T."/>
            <person name="Woodward J."/>
            <person name="Norberczak H."/>
            <person name="Lord A."/>
            <person name="Arrowsmith C."/>
            <person name="Jagels K."/>
            <person name="Moule S."/>
            <person name="Mungall K."/>
            <person name="Saunders M."/>
            <person name="Whitehead S."/>
            <person name="Chabalgoity J.A."/>
            <person name="Maskell D."/>
            <person name="Humphreys T."/>
            <person name="Roberts M."/>
            <person name="Barrow P.A."/>
            <person name="Dougan G."/>
            <person name="Parkhill J."/>
        </authorList>
    </citation>
    <scope>NUCLEOTIDE SEQUENCE [LARGE SCALE GENOMIC DNA]</scope>
    <source>
        <strain>P125109</strain>
    </source>
</reference>
<protein>
    <recommendedName>
        <fullName evidence="1">Xanthine-guanine phosphoribosyltransferase</fullName>
        <shortName evidence="1">XGPRT</shortName>
        <ecNumber evidence="1">2.4.2.-</ecNumber>
        <ecNumber evidence="1">2.4.2.22</ecNumber>
    </recommendedName>
    <alternativeName>
        <fullName evidence="1">Xanthine phosphoribosyltransferase</fullName>
    </alternativeName>
</protein>
<sequence length="152" mass="16970">MSEKYVVTWDMLQIHARKLASRLMPSEQWKGIIAVSRGGLVPGALLARELGIRHVDTVCISSYDHDNQRELKVLKRAEGDGEGFIVIDDLVDTGGTAVAIREMYPKAHFVTIFAKPAGRPLVDDYVIDIPQNTWIEQPWDMGVVFVPPISGR</sequence>
<gene>
    <name evidence="1" type="primary">gpt</name>
    <name type="ordered locus">SEN0300</name>
</gene>
<accession>B5R4S1</accession>
<proteinExistence type="inferred from homology"/>
<feature type="chain" id="PRO_1000188754" description="Xanthine-guanine phosphoribosyltransferase">
    <location>
        <begin position="1"/>
        <end position="152"/>
    </location>
</feature>
<feature type="binding site" evidence="1">
    <location>
        <begin position="37"/>
        <end position="38"/>
    </location>
    <ligand>
        <name>5-phospho-alpha-D-ribose 1-diphosphate</name>
        <dbReference type="ChEBI" id="CHEBI:58017"/>
    </ligand>
</feature>
<feature type="binding site" evidence="1">
    <location>
        <position position="69"/>
    </location>
    <ligand>
        <name>5-phospho-alpha-D-ribose 1-diphosphate</name>
        <dbReference type="ChEBI" id="CHEBI:58017"/>
    </ligand>
</feature>
<feature type="binding site" evidence="1">
    <location>
        <position position="69"/>
    </location>
    <ligand>
        <name>GMP</name>
        <dbReference type="ChEBI" id="CHEBI:58115"/>
    </ligand>
</feature>
<feature type="binding site" evidence="1">
    <location>
        <begin position="88"/>
        <end position="96"/>
    </location>
    <ligand>
        <name>5-phospho-alpha-D-ribose 1-diphosphate</name>
        <dbReference type="ChEBI" id="CHEBI:58017"/>
    </ligand>
</feature>
<feature type="binding site" evidence="1">
    <location>
        <position position="89"/>
    </location>
    <ligand>
        <name>Mg(2+)</name>
        <dbReference type="ChEBI" id="CHEBI:18420"/>
    </ligand>
</feature>
<feature type="binding site" evidence="1">
    <location>
        <begin position="92"/>
        <end position="96"/>
    </location>
    <ligand>
        <name>GMP</name>
        <dbReference type="ChEBI" id="CHEBI:58115"/>
    </ligand>
</feature>
<feature type="binding site" evidence="1">
    <location>
        <position position="92"/>
    </location>
    <ligand>
        <name>guanine</name>
        <dbReference type="ChEBI" id="CHEBI:16235"/>
    </ligand>
</feature>
<feature type="binding site" evidence="1">
    <location>
        <position position="92"/>
    </location>
    <ligand>
        <name>xanthine</name>
        <dbReference type="ChEBI" id="CHEBI:17712"/>
    </ligand>
</feature>
<feature type="binding site" evidence="1">
    <location>
        <begin position="134"/>
        <end position="135"/>
    </location>
    <ligand>
        <name>GMP</name>
        <dbReference type="ChEBI" id="CHEBI:58115"/>
    </ligand>
</feature>
<feature type="binding site" evidence="1">
    <location>
        <position position="135"/>
    </location>
    <ligand>
        <name>guanine</name>
        <dbReference type="ChEBI" id="CHEBI:16235"/>
    </ligand>
</feature>
<feature type="binding site" evidence="1">
    <location>
        <position position="135"/>
    </location>
    <ligand>
        <name>xanthine</name>
        <dbReference type="ChEBI" id="CHEBI:17712"/>
    </ligand>
</feature>
<keyword id="KW-0997">Cell inner membrane</keyword>
<keyword id="KW-1003">Cell membrane</keyword>
<keyword id="KW-0328">Glycosyltransferase</keyword>
<keyword id="KW-0460">Magnesium</keyword>
<keyword id="KW-0472">Membrane</keyword>
<keyword id="KW-0479">Metal-binding</keyword>
<keyword id="KW-0660">Purine salvage</keyword>
<keyword id="KW-0808">Transferase</keyword>
<evidence type="ECO:0000255" key="1">
    <source>
        <dbReference type="HAMAP-Rule" id="MF_01903"/>
    </source>
</evidence>
<comment type="function">
    <text evidence="1">Purine salvage pathway enzyme that catalyzes the transfer of the ribosyl-5-phosphate group from 5-phospho-alpha-D-ribose 1-diphosphate (PRPP) to the N9 position of the 6-oxopurines guanine and xanthine to form the corresponding ribonucleotides GMP (guanosine 5'-monophosphate) and XMP (xanthosine 5'-monophosphate), with the release of PPi. To a lesser extent, also acts on hypoxanthine.</text>
</comment>
<comment type="catalytic activity">
    <reaction evidence="1">
        <text>GMP + diphosphate = guanine + 5-phospho-alpha-D-ribose 1-diphosphate</text>
        <dbReference type="Rhea" id="RHEA:25424"/>
        <dbReference type="ChEBI" id="CHEBI:16235"/>
        <dbReference type="ChEBI" id="CHEBI:33019"/>
        <dbReference type="ChEBI" id="CHEBI:58017"/>
        <dbReference type="ChEBI" id="CHEBI:58115"/>
    </reaction>
    <physiologicalReaction direction="right-to-left" evidence="1">
        <dbReference type="Rhea" id="RHEA:25426"/>
    </physiologicalReaction>
</comment>
<comment type="catalytic activity">
    <reaction evidence="1">
        <text>XMP + diphosphate = xanthine + 5-phospho-alpha-D-ribose 1-diphosphate</text>
        <dbReference type="Rhea" id="RHEA:10800"/>
        <dbReference type="ChEBI" id="CHEBI:17712"/>
        <dbReference type="ChEBI" id="CHEBI:33019"/>
        <dbReference type="ChEBI" id="CHEBI:57464"/>
        <dbReference type="ChEBI" id="CHEBI:58017"/>
        <dbReference type="EC" id="2.4.2.22"/>
    </reaction>
    <physiologicalReaction direction="right-to-left" evidence="1">
        <dbReference type="Rhea" id="RHEA:10802"/>
    </physiologicalReaction>
</comment>
<comment type="catalytic activity">
    <reaction evidence="1">
        <text>IMP + diphosphate = hypoxanthine + 5-phospho-alpha-D-ribose 1-diphosphate</text>
        <dbReference type="Rhea" id="RHEA:17973"/>
        <dbReference type="ChEBI" id="CHEBI:17368"/>
        <dbReference type="ChEBI" id="CHEBI:33019"/>
        <dbReference type="ChEBI" id="CHEBI:58017"/>
        <dbReference type="ChEBI" id="CHEBI:58053"/>
    </reaction>
    <physiologicalReaction direction="right-to-left" evidence="1">
        <dbReference type="Rhea" id="RHEA:17975"/>
    </physiologicalReaction>
</comment>
<comment type="cofactor">
    <cofactor evidence="1">
        <name>Mg(2+)</name>
        <dbReference type="ChEBI" id="CHEBI:18420"/>
    </cofactor>
</comment>
<comment type="pathway">
    <text evidence="1">Purine metabolism; GMP biosynthesis via salvage pathway; GMP from guanine: step 1/1.</text>
</comment>
<comment type="pathway">
    <text evidence="1">Purine metabolism; XMP biosynthesis via salvage pathway; XMP from xanthine: step 1/1.</text>
</comment>
<comment type="subunit">
    <text evidence="1">Homotetramer.</text>
</comment>
<comment type="subcellular location">
    <subcellularLocation>
        <location evidence="1">Cell inner membrane</location>
        <topology evidence="1">Peripheral membrane protein</topology>
    </subcellularLocation>
</comment>
<comment type="similarity">
    <text evidence="1">Belongs to the purine/pyrimidine phosphoribosyltransferase family. XGPT subfamily.</text>
</comment>
<organism>
    <name type="scientific">Salmonella enteritidis PT4 (strain P125109)</name>
    <dbReference type="NCBI Taxonomy" id="550537"/>
    <lineage>
        <taxon>Bacteria</taxon>
        <taxon>Pseudomonadati</taxon>
        <taxon>Pseudomonadota</taxon>
        <taxon>Gammaproteobacteria</taxon>
        <taxon>Enterobacterales</taxon>
        <taxon>Enterobacteriaceae</taxon>
        <taxon>Salmonella</taxon>
    </lineage>
</organism>